<gene>
    <name type="primary">Cep19</name>
</gene>
<organism>
    <name type="scientific">Rattus norvegicus</name>
    <name type="common">Rat</name>
    <dbReference type="NCBI Taxonomy" id="10116"/>
    <lineage>
        <taxon>Eukaryota</taxon>
        <taxon>Metazoa</taxon>
        <taxon>Chordata</taxon>
        <taxon>Craniata</taxon>
        <taxon>Vertebrata</taxon>
        <taxon>Euteleostomi</taxon>
        <taxon>Mammalia</taxon>
        <taxon>Eutheria</taxon>
        <taxon>Euarchontoglires</taxon>
        <taxon>Glires</taxon>
        <taxon>Rodentia</taxon>
        <taxon>Myomorpha</taxon>
        <taxon>Muroidea</taxon>
        <taxon>Muridae</taxon>
        <taxon>Murinae</taxon>
        <taxon>Rattus</taxon>
    </lineage>
</organism>
<dbReference type="EMBL" id="AF146738">
    <property type="protein sequence ID" value="AAD53055.1"/>
    <property type="status" value="ALT_INIT"/>
    <property type="molecule type" value="mRNA"/>
</dbReference>
<dbReference type="SMR" id="Q9QZX9"/>
<dbReference type="FunCoup" id="Q9QZX9">
    <property type="interactions" value="512"/>
</dbReference>
<dbReference type="STRING" id="10116.ENSRNOP00000038182"/>
<dbReference type="PhosphoSitePlus" id="Q9QZX9"/>
<dbReference type="PaxDb" id="10116-ENSRNOP00000038182"/>
<dbReference type="UCSC" id="RGD:621352">
    <property type="organism name" value="rat"/>
</dbReference>
<dbReference type="AGR" id="RGD:621352"/>
<dbReference type="RGD" id="621352">
    <property type="gene designation" value="Cep19"/>
</dbReference>
<dbReference type="eggNOG" id="ENOG502RZP1">
    <property type="taxonomic scope" value="Eukaryota"/>
</dbReference>
<dbReference type="InParanoid" id="Q9QZX9"/>
<dbReference type="PhylomeDB" id="Q9QZX9"/>
<dbReference type="PRO" id="PR:Q9QZX9"/>
<dbReference type="Proteomes" id="UP000002494">
    <property type="component" value="Unplaced"/>
</dbReference>
<dbReference type="GO" id="GO:0005814">
    <property type="term" value="C:centriole"/>
    <property type="evidence" value="ECO:0000250"/>
    <property type="project" value="UniProtKB"/>
</dbReference>
<dbReference type="GO" id="GO:0005813">
    <property type="term" value="C:centrosome"/>
    <property type="evidence" value="ECO:0000318"/>
    <property type="project" value="GO_Central"/>
</dbReference>
<dbReference type="GO" id="GO:0036064">
    <property type="term" value="C:ciliary basal body"/>
    <property type="evidence" value="ECO:0000250"/>
    <property type="project" value="UniProtKB"/>
</dbReference>
<dbReference type="GO" id="GO:0005929">
    <property type="term" value="C:cilium"/>
    <property type="evidence" value="ECO:0000266"/>
    <property type="project" value="RGD"/>
</dbReference>
<dbReference type="GO" id="GO:0005737">
    <property type="term" value="C:cytoplasm"/>
    <property type="evidence" value="ECO:0007669"/>
    <property type="project" value="UniProtKB-KW"/>
</dbReference>
<dbReference type="GO" id="GO:0000922">
    <property type="term" value="C:spindle pole"/>
    <property type="evidence" value="ECO:0000250"/>
    <property type="project" value="UniProtKB"/>
</dbReference>
<dbReference type="GO" id="GO:0060271">
    <property type="term" value="P:cilium assembly"/>
    <property type="evidence" value="ECO:0000250"/>
    <property type="project" value="UniProtKB"/>
</dbReference>
<dbReference type="GO" id="GO:0034454">
    <property type="term" value="P:microtubule anchoring at centrosome"/>
    <property type="evidence" value="ECO:0000250"/>
    <property type="project" value="UniProtKB"/>
</dbReference>
<dbReference type="GO" id="GO:0097712">
    <property type="term" value="P:vesicle targeting, trans-Golgi to periciliary membrane compartment"/>
    <property type="evidence" value="ECO:0000250"/>
    <property type="project" value="UniProtKB"/>
</dbReference>
<dbReference type="InterPro" id="IPR029412">
    <property type="entry name" value="CEP19"/>
</dbReference>
<dbReference type="PANTHER" id="PTHR31539:SF1">
    <property type="entry name" value="CENTROSOMAL PROTEIN OF 19 KDA"/>
    <property type="match status" value="1"/>
</dbReference>
<dbReference type="PANTHER" id="PTHR31539">
    <property type="entry name" value="CENTROSOMAL PROTEIN OF 19K CEP19"/>
    <property type="match status" value="1"/>
</dbReference>
<dbReference type="Pfam" id="PF14933">
    <property type="entry name" value="CEP19"/>
    <property type="match status" value="1"/>
</dbReference>
<sequence length="163" mass="19149">MKYIAKKCGVRFQPPAMILIYENEAEGKSRQRIMPVRNFSKFSDCTRAAEQLKNNPRHKSYLEQVSLKQLEKLFVFLRGSLQGQSLAETMEQIQRETTIDPEEDLNKLDDKELAKRKSIMDELFEKNQKRKDDPSFVYDVEVEFPQDEQLQSCSWDTASVDEF</sequence>
<accession>Q9QZX9</accession>
<proteinExistence type="evidence at transcript level"/>
<name>CEP19_RAT</name>
<protein>
    <recommendedName>
        <fullName>Centrosomal protein of 19 kDa</fullName>
        <shortName>Cep19</shortName>
    </recommendedName>
</protein>
<feature type="chain" id="PRO_0000251962" description="Centrosomal protein of 19 kDa">
    <location>
        <begin position="1"/>
        <end position="163"/>
    </location>
</feature>
<comment type="function">
    <text evidence="1">Required for ciliation. Recruits the RABL2B GTPase to the ciliary base to initiate ciliation. After specifically capturing the activated GTP-bound RABL2B, the CEP19-RABL2B complex binds intraflagellar transport (IFT) complex B from the large pool pre-docked at the base of the cilium and thus triggers its entry into the cilia. Involved in the early steps in cilia formation by recruiting the ciliary vesicles (CVs) to the distal end of the mother centriole where they fuse to initiate cilium assembly. Involved in microtubule (MT) anchoring at centrosomes.</text>
</comment>
<comment type="subunit">
    <text evidence="1">Interacts with CEP43; this interaction is required for its localization to the mother centriole. Interacts (via residues 121-150) with RABL2B. Interacts (via C-terminus) with CEP350; this interaction is required for its localization to the mother centriole.</text>
</comment>
<comment type="subcellular location">
    <subcellularLocation>
        <location evidence="1">Cytoplasm</location>
        <location evidence="1">Cytoskeleton</location>
        <location evidence="1">Microtubule organizing center</location>
        <location evidence="1">Centrosome</location>
        <location evidence="1">Centriole</location>
    </subcellularLocation>
    <subcellularLocation>
        <location evidence="1">Cytoplasm</location>
        <location evidence="1">Cytoskeleton</location>
        <location evidence="1">Spindle pole</location>
    </subcellularLocation>
    <subcellularLocation>
        <location evidence="1">Cytoplasm</location>
        <location evidence="1">Cytoskeleton</location>
        <location evidence="1">Cilium basal body</location>
    </subcellularLocation>
    <text evidence="1">Associates with the mother centriole in early interphase. Localizes to spindle poles during mitosis, and to distinct foci oriented towards the midbody at telophase. Localizes slightly apical to the subdistal appendage on the mother centriole, but below the distal appendage.</text>
</comment>
<comment type="similarity">
    <text evidence="2">Belongs to the CEP19 family.</text>
</comment>
<comment type="sequence caution" evidence="2">
    <conflict type="erroneous initiation">
        <sequence resource="EMBL-CDS" id="AAD53055"/>
    </conflict>
    <text>Extended N-terminus.</text>
</comment>
<evidence type="ECO:0000250" key="1">
    <source>
        <dbReference type="UniProtKB" id="Q96LK0"/>
    </source>
</evidence>
<evidence type="ECO:0000305" key="2"/>
<keyword id="KW-0966">Cell projection</keyword>
<keyword id="KW-0969">Cilium</keyword>
<keyword id="KW-0970">Cilium biogenesis/degradation</keyword>
<keyword id="KW-0963">Cytoplasm</keyword>
<keyword id="KW-0206">Cytoskeleton</keyword>
<keyword id="KW-1185">Reference proteome</keyword>
<reference key="1">
    <citation type="submission" date="1999-04" db="EMBL/GenBank/DDBJ databases">
        <authorList>
            <person name="Wang L.F."/>
            <person name="Miao S.Y."/>
            <person name="Yang J."/>
            <person name="Zhang X.D."/>
            <person name="Li M."/>
            <person name="Zhao M."/>
        </authorList>
    </citation>
    <scope>NUCLEOTIDE SEQUENCE [LARGE SCALE MRNA]</scope>
    <source>
        <strain>Wistar</strain>
        <tissue>Testis</tissue>
    </source>
</reference>